<gene>
    <name evidence="1" type="primary">sspK</name>
    <name type="ordered locus">BCAH820_0500</name>
</gene>
<proteinExistence type="inferred from homology"/>
<keyword id="KW-0749">Sporulation</keyword>
<reference key="1">
    <citation type="submission" date="2008-10" db="EMBL/GenBank/DDBJ databases">
        <title>Genome sequence of Bacillus cereus AH820.</title>
        <authorList>
            <person name="Dodson R.J."/>
            <person name="Durkin A.S."/>
            <person name="Rosovitz M.J."/>
            <person name="Rasko D.A."/>
            <person name="Hoffmaster A."/>
            <person name="Ravel J."/>
            <person name="Sutton G."/>
        </authorList>
    </citation>
    <scope>NUCLEOTIDE SEQUENCE [LARGE SCALE GENOMIC DNA]</scope>
    <source>
        <strain>AH820</strain>
    </source>
</reference>
<protein>
    <recommendedName>
        <fullName evidence="1">Small, acid-soluble spore protein K</fullName>
        <shortName evidence="1">SASP K</shortName>
    </recommendedName>
</protein>
<evidence type="ECO:0000255" key="1">
    <source>
        <dbReference type="HAMAP-Rule" id="MF_01504"/>
    </source>
</evidence>
<evidence type="ECO:0000256" key="2">
    <source>
        <dbReference type="SAM" id="MobiDB-lite"/>
    </source>
</evidence>
<dbReference type="EMBL" id="CP001283">
    <property type="protein sequence ID" value="ACK89736.1"/>
    <property type="molecule type" value="Genomic_DNA"/>
</dbReference>
<dbReference type="RefSeq" id="WP_000517891.1">
    <property type="nucleotide sequence ID" value="NC_011773.1"/>
</dbReference>
<dbReference type="KEGG" id="bcu:BCAH820_0500"/>
<dbReference type="HOGENOM" id="CLU_3076423_0_0_9"/>
<dbReference type="Proteomes" id="UP000001363">
    <property type="component" value="Chromosome"/>
</dbReference>
<dbReference type="GO" id="GO:0042601">
    <property type="term" value="C:endospore-forming forespore"/>
    <property type="evidence" value="ECO:0007669"/>
    <property type="project" value="InterPro"/>
</dbReference>
<dbReference type="GO" id="GO:0030436">
    <property type="term" value="P:asexual sporulation"/>
    <property type="evidence" value="ECO:0007669"/>
    <property type="project" value="UniProtKB-UniRule"/>
</dbReference>
<dbReference type="GO" id="GO:0030435">
    <property type="term" value="P:sporulation resulting in formation of a cellular spore"/>
    <property type="evidence" value="ECO:0007669"/>
    <property type="project" value="UniProtKB-KW"/>
</dbReference>
<dbReference type="HAMAP" id="MF_01504">
    <property type="entry name" value="SspK"/>
    <property type="match status" value="1"/>
</dbReference>
<dbReference type="InterPro" id="IPR012611">
    <property type="entry name" value="SASP_SspK"/>
</dbReference>
<dbReference type="NCBIfam" id="NF002843">
    <property type="entry name" value="PRK03081.1"/>
    <property type="match status" value="1"/>
</dbReference>
<dbReference type="NCBIfam" id="TIGR03091">
    <property type="entry name" value="SASP_sspK"/>
    <property type="match status" value="1"/>
</dbReference>
<dbReference type="Pfam" id="PF08176">
    <property type="entry name" value="SspK"/>
    <property type="match status" value="1"/>
</dbReference>
<feature type="chain" id="PRO_1000196545" description="Small, acid-soluble spore protein K">
    <location>
        <begin position="1"/>
        <end position="52"/>
    </location>
</feature>
<feature type="region of interest" description="Disordered" evidence="2">
    <location>
        <begin position="1"/>
        <end position="52"/>
    </location>
</feature>
<sequence length="52" mass="5946">MGKQAEFWSESKNNSKIDGQPKAKSRFASKRPNGTINTHPQERMRAANQQEE</sequence>
<organism>
    <name type="scientific">Bacillus cereus (strain AH820)</name>
    <dbReference type="NCBI Taxonomy" id="405535"/>
    <lineage>
        <taxon>Bacteria</taxon>
        <taxon>Bacillati</taxon>
        <taxon>Bacillota</taxon>
        <taxon>Bacilli</taxon>
        <taxon>Bacillales</taxon>
        <taxon>Bacillaceae</taxon>
        <taxon>Bacillus</taxon>
        <taxon>Bacillus cereus group</taxon>
    </lineage>
</organism>
<comment type="subcellular location">
    <subcellularLocation>
        <location evidence="1">Spore core</location>
    </subcellularLocation>
</comment>
<comment type="induction">
    <text evidence="1">Expressed only in the forespore compartment of sporulating cells.</text>
</comment>
<comment type="similarity">
    <text evidence="1">Belongs to the SspK family.</text>
</comment>
<name>SSPK_BACC0</name>
<accession>B7JNF2</accession>